<protein>
    <recommendedName>
        <fullName>Cytochrome P450 3A2</fullName>
        <ecNumber>1.14.14.1</ecNumber>
    </recommendedName>
    <alternativeName>
        <fullName>CYPIIIA2</fullName>
    </alternativeName>
    <alternativeName>
        <fullName>Cytochrome P450-PCN2</fullName>
    </alternativeName>
    <alternativeName>
        <fullName>Cytochrome P450/6-beta-A</fullName>
    </alternativeName>
    <alternativeName>
        <fullName>Testosterone 6-beta-hydroxylase</fullName>
    </alternativeName>
</protein>
<accession>P05183</accession>
<accession>Q5FVU5</accession>
<accession>Q64629</accession>
<accession>Q64672</accession>
<feature type="chain" id="PRO_0000051784" description="Cytochrome P450 3A2">
    <location>
        <begin position="1"/>
        <end position="504"/>
    </location>
</feature>
<feature type="binding site" description="axial binding residue">
    <location>
        <position position="443"/>
    </location>
    <ligand>
        <name>heme</name>
        <dbReference type="ChEBI" id="CHEBI:30413"/>
    </ligand>
    <ligandPart>
        <name>Fe</name>
        <dbReference type="ChEBI" id="CHEBI:18248"/>
    </ligandPart>
</feature>
<feature type="sequence conflict" description="In Ref. 2; CAA55887." evidence="5" ref="2">
    <original>GL</original>
    <variation>AV</variation>
    <location>
        <begin position="56"/>
        <end position="57"/>
    </location>
</feature>
<feature type="sequence conflict" description="In Ref. 1; AAA41051." evidence="5" ref="1">
    <original>D</original>
    <variation>H</variation>
    <location>
        <position position="429"/>
    </location>
</feature>
<feature type="sequence conflict" description="In Ref. 1; AAA41051." evidence="5" ref="1">
    <original>G</original>
    <variation>D</variation>
    <location>
        <position position="445"/>
    </location>
</feature>
<name>CP3A2_RAT</name>
<gene>
    <name type="primary">Cyp3a2</name>
    <name type="synonym">Cyp3a-2</name>
    <name type="synonym">Cyp3a11</name>
</gene>
<comment type="function">
    <text>Cytochromes P450 are a group of heme-thiolate monooxygenases. In liver microsomes, this enzyme is involved in an NADPH-dependent electron transport pathway. It oxidizes a variety of structurally unrelated compounds, including steroids, fatty acids, and xenobiotics.</text>
</comment>
<comment type="catalytic activity">
    <reaction>
        <text>an organic molecule + reduced [NADPH--hemoprotein reductase] + O2 = an alcohol + oxidized [NADPH--hemoprotein reductase] + H2O + H(+)</text>
        <dbReference type="Rhea" id="RHEA:17149"/>
        <dbReference type="Rhea" id="RHEA-COMP:11964"/>
        <dbReference type="Rhea" id="RHEA-COMP:11965"/>
        <dbReference type="ChEBI" id="CHEBI:15377"/>
        <dbReference type="ChEBI" id="CHEBI:15378"/>
        <dbReference type="ChEBI" id="CHEBI:15379"/>
        <dbReference type="ChEBI" id="CHEBI:30879"/>
        <dbReference type="ChEBI" id="CHEBI:57618"/>
        <dbReference type="ChEBI" id="CHEBI:58210"/>
        <dbReference type="ChEBI" id="CHEBI:142491"/>
        <dbReference type="EC" id="1.14.14.1"/>
    </reaction>
</comment>
<comment type="cofactor">
    <cofactor evidence="1">
        <name>heme</name>
        <dbReference type="ChEBI" id="CHEBI:30413"/>
    </cofactor>
</comment>
<comment type="subcellular location">
    <subcellularLocation>
        <location>Endoplasmic reticulum membrane</location>
        <topology>Peripheral membrane protein</topology>
    </subcellularLocation>
    <subcellularLocation>
        <location>Microsome membrane</location>
        <topology>Peripheral membrane protein</topology>
    </subcellularLocation>
</comment>
<comment type="tissue specificity">
    <text evidence="3 4">Expressed in liver.</text>
</comment>
<comment type="induction">
    <text evidence="2 3 4">By pregnenolone 16-alpha-carbonitrile (PNCN) and dexamethasone.</text>
</comment>
<comment type="similarity">
    <text evidence="5">Belongs to the cytochrome P450 family.</text>
</comment>
<proteinExistence type="evidence at protein level"/>
<sequence length="504" mass="57732">MDLLSALTLETWVLLAVILVLLYRLGTHRHGIFKKQGIPGPKPLPFLGTVLNYYKGLGRFDMECYKKYGKIWGLFDGQTPVFAIMDTEMIKNVLVKECFSVFTNRRDFGPVGIMGKAVSVAKDEEWKRYRALLSPTFTSGRLKEMFPIIEQYGDILVKYLKQEAETGKPVTMKKVFGAYSMDVITSTSFGVNVDSLNNPKDPFVEKTKKLLRFDFFDPLFLSVVLFPFLTPIYEMLNICMFPKDSIAFFQKFVHRIKETRLDSKHKHRVDFLQLMLNAHNNSKDEVSHKALSDVEIIAQSVIFIFAGYETTSSTLSFVLYFLATHPDIQKKLQEEIDGALPSKAPPTYDIVMEMEYLDMVLNETLRLYPIGNRLERVCKKDIELDGLFIPKGSVVTIPTYALHHDPQHWPKPEEFHPERFSKENKGSIDPYVYLPFGNGPRNCIGMRFALMNMKLALTKVLQNFSFQPCKETQIPLKLSRQAILEPEKPIVLKVLPRDAVINGA</sequence>
<evidence type="ECO:0000250" key="1"/>
<evidence type="ECO:0000269" key="2">
    <source>
    </source>
</evidence>
<evidence type="ECO:0000269" key="3">
    <source>
    </source>
</evidence>
<evidence type="ECO:0000269" key="4">
    <source>
    </source>
</evidence>
<evidence type="ECO:0000305" key="5"/>
<dbReference type="EC" id="1.14.14.1"/>
<dbReference type="EMBL" id="M13646">
    <property type="protein sequence ID" value="AAA41051.1"/>
    <property type="molecule type" value="mRNA"/>
</dbReference>
<dbReference type="EMBL" id="X79319">
    <property type="protein sequence ID" value="CAA55887.1"/>
    <property type="molecule type" value="Genomic_DNA"/>
</dbReference>
<dbReference type="EMBL" id="X79320">
    <property type="protein sequence ID" value="CAA55888.1"/>
    <property type="molecule type" value="mRNA"/>
</dbReference>
<dbReference type="EMBL" id="U09742">
    <property type="protein sequence ID" value="AAA82168.1"/>
    <property type="molecule type" value="mRNA"/>
</dbReference>
<dbReference type="EMBL" id="U09734">
    <property type="protein sequence ID" value="AAB60492.1"/>
    <property type="molecule type" value="Genomic_DNA"/>
</dbReference>
<dbReference type="EMBL" id="U09725">
    <property type="protein sequence ID" value="AAB60492.1"/>
    <property type="status" value="JOINED"/>
    <property type="molecule type" value="Genomic_DNA"/>
</dbReference>
<dbReference type="EMBL" id="U09726">
    <property type="protein sequence ID" value="AAB60492.1"/>
    <property type="status" value="JOINED"/>
    <property type="molecule type" value="Genomic_DNA"/>
</dbReference>
<dbReference type="EMBL" id="U09727">
    <property type="protein sequence ID" value="AAB60492.1"/>
    <property type="status" value="JOINED"/>
    <property type="molecule type" value="Genomic_DNA"/>
</dbReference>
<dbReference type="EMBL" id="U09728">
    <property type="protein sequence ID" value="AAB60492.1"/>
    <property type="status" value="JOINED"/>
    <property type="molecule type" value="Genomic_DNA"/>
</dbReference>
<dbReference type="EMBL" id="U09729">
    <property type="protein sequence ID" value="AAB60492.1"/>
    <property type="status" value="JOINED"/>
    <property type="molecule type" value="Genomic_DNA"/>
</dbReference>
<dbReference type="EMBL" id="U09730">
    <property type="protein sequence ID" value="AAB60492.1"/>
    <property type="status" value="JOINED"/>
    <property type="molecule type" value="Genomic_DNA"/>
</dbReference>
<dbReference type="EMBL" id="U09731">
    <property type="protein sequence ID" value="AAB60492.1"/>
    <property type="status" value="JOINED"/>
    <property type="molecule type" value="Genomic_DNA"/>
</dbReference>
<dbReference type="EMBL" id="U09732">
    <property type="protein sequence ID" value="AAB60492.1"/>
    <property type="status" value="JOINED"/>
    <property type="molecule type" value="Genomic_DNA"/>
</dbReference>
<dbReference type="EMBL" id="U09733">
    <property type="protein sequence ID" value="AAB60492.1"/>
    <property type="status" value="JOINED"/>
    <property type="molecule type" value="Genomic_DNA"/>
</dbReference>
<dbReference type="EMBL" id="BC089765">
    <property type="protein sequence ID" value="AAH89765.1"/>
    <property type="molecule type" value="mRNA"/>
</dbReference>
<dbReference type="PIR" id="A25222">
    <property type="entry name" value="A25222"/>
</dbReference>
<dbReference type="RefSeq" id="NP_695224.2">
    <property type="nucleotide sequence ID" value="NM_153312.2"/>
</dbReference>
<dbReference type="SMR" id="P05183"/>
<dbReference type="FunCoup" id="P05183">
    <property type="interactions" value="41"/>
</dbReference>
<dbReference type="BindingDB" id="P05183"/>
<dbReference type="ChEMBL" id="CHEMBL3324"/>
<dbReference type="DrugBank" id="DB13746">
    <property type="generic name" value="Bioallethrin"/>
</dbReference>
<dbReference type="DrugBank" id="DB13975">
    <property type="generic name" value="Black cohosh"/>
</dbReference>
<dbReference type="DrugBank" id="DB00869">
    <property type="generic name" value="Dorzolamide"/>
</dbReference>
<dbReference type="DrugBank" id="DB01645">
    <property type="generic name" value="Genistein"/>
</dbReference>
<dbReference type="DrugBank" id="DB08834">
    <property type="generic name" value="Tauroursodeoxycholic acid"/>
</dbReference>
<dbReference type="iPTMnet" id="P05183"/>
<dbReference type="PhosphoSitePlus" id="P05183"/>
<dbReference type="GeneID" id="266682"/>
<dbReference type="KEGG" id="rno:266682"/>
<dbReference type="AGR" id="RGD:708379"/>
<dbReference type="CTD" id="266682"/>
<dbReference type="RGD" id="708379">
    <property type="gene designation" value="Cyp3a2"/>
</dbReference>
<dbReference type="InParanoid" id="P05183"/>
<dbReference type="PhylomeDB" id="P05183"/>
<dbReference type="Reactome" id="R-RNO-211945">
    <property type="pathway name" value="Phase I - Functionalization of compounds"/>
</dbReference>
<dbReference type="Reactome" id="R-RNO-211958">
    <property type="pathway name" value="Miscellaneous substrates"/>
</dbReference>
<dbReference type="Reactome" id="R-RNO-211981">
    <property type="pathway name" value="Xenobiotics"/>
</dbReference>
<dbReference type="Reactome" id="R-RNO-5423646">
    <property type="pathway name" value="Aflatoxin activation and detoxification"/>
</dbReference>
<dbReference type="Reactome" id="R-RNO-9027307">
    <property type="pathway name" value="Biosynthesis of maresin-like SPMs"/>
</dbReference>
<dbReference type="Reactome" id="R-RNO-9749641">
    <property type="pathway name" value="Aspirin ADME"/>
</dbReference>
<dbReference type="Reactome" id="R-RNO-9754706">
    <property type="pathway name" value="Atorvastatin ADME"/>
</dbReference>
<dbReference type="Reactome" id="R-RNO-9757110">
    <property type="pathway name" value="Prednisone ADME"/>
</dbReference>
<dbReference type="SABIO-RK" id="P05183"/>
<dbReference type="PRO" id="PR:P05183"/>
<dbReference type="Proteomes" id="UP000002494">
    <property type="component" value="Unplaced"/>
</dbReference>
<dbReference type="GO" id="GO:0005737">
    <property type="term" value="C:cytoplasm"/>
    <property type="evidence" value="ECO:0000266"/>
    <property type="project" value="RGD"/>
</dbReference>
<dbReference type="GO" id="GO:0005789">
    <property type="term" value="C:endoplasmic reticulum membrane"/>
    <property type="evidence" value="ECO:0007669"/>
    <property type="project" value="UniProtKB-SubCell"/>
</dbReference>
<dbReference type="GO" id="GO:0062181">
    <property type="term" value="F:1-alpha,25-dihydroxyvitamin D3 23-hydroxylase activity"/>
    <property type="evidence" value="ECO:0000266"/>
    <property type="project" value="RGD"/>
</dbReference>
<dbReference type="GO" id="GO:0034875">
    <property type="term" value="F:caffeine oxidase activity"/>
    <property type="evidence" value="ECO:0000266"/>
    <property type="project" value="RGD"/>
</dbReference>
<dbReference type="GO" id="GO:0032451">
    <property type="term" value="F:demethylase activity"/>
    <property type="evidence" value="ECO:0000314"/>
    <property type="project" value="RGD"/>
</dbReference>
<dbReference type="GO" id="GO:0019899">
    <property type="term" value="F:enzyme binding"/>
    <property type="evidence" value="ECO:0000266"/>
    <property type="project" value="RGD"/>
</dbReference>
<dbReference type="GO" id="GO:0101020">
    <property type="term" value="F:estrogen 16-alpha-hydroxylase activity"/>
    <property type="evidence" value="ECO:0000266"/>
    <property type="project" value="RGD"/>
</dbReference>
<dbReference type="GO" id="GO:0101021">
    <property type="term" value="F:estrogen 2-hydroxylase activity"/>
    <property type="evidence" value="ECO:0000266"/>
    <property type="project" value="RGD"/>
</dbReference>
<dbReference type="GO" id="GO:0020037">
    <property type="term" value="F:heme binding"/>
    <property type="evidence" value="ECO:0007669"/>
    <property type="project" value="InterPro"/>
</dbReference>
<dbReference type="GO" id="GO:0005506">
    <property type="term" value="F:iron ion binding"/>
    <property type="evidence" value="ECO:0000266"/>
    <property type="project" value="RGD"/>
</dbReference>
<dbReference type="GO" id="GO:0004497">
    <property type="term" value="F:monooxygenase activity"/>
    <property type="evidence" value="ECO:0000314"/>
    <property type="project" value="RGD"/>
</dbReference>
<dbReference type="GO" id="GO:0016491">
    <property type="term" value="F:oxidoreductase activity"/>
    <property type="evidence" value="ECO:0000266"/>
    <property type="project" value="RGD"/>
</dbReference>
<dbReference type="GO" id="GO:0008401">
    <property type="term" value="F:retinoic acid 4-hydroxylase activity"/>
    <property type="evidence" value="ECO:0000266"/>
    <property type="project" value="RGD"/>
</dbReference>
<dbReference type="GO" id="GO:0005496">
    <property type="term" value="F:steroid binding"/>
    <property type="evidence" value="ECO:0000266"/>
    <property type="project" value="RGD"/>
</dbReference>
<dbReference type="GO" id="GO:0008395">
    <property type="term" value="F:steroid hydroxylase activity"/>
    <property type="evidence" value="ECO:0000266"/>
    <property type="project" value="RGD"/>
</dbReference>
<dbReference type="GO" id="GO:0050649">
    <property type="term" value="F:testosterone 6-beta-hydroxylase activity"/>
    <property type="evidence" value="ECO:0000315"/>
    <property type="project" value="RGD"/>
</dbReference>
<dbReference type="GO" id="GO:0070576">
    <property type="term" value="F:vitamin D 24-hydroxylase activity"/>
    <property type="evidence" value="ECO:0000266"/>
    <property type="project" value="RGD"/>
</dbReference>
<dbReference type="GO" id="GO:0030343">
    <property type="term" value="F:vitamin D3 25-hydroxylase activity"/>
    <property type="evidence" value="ECO:0000266"/>
    <property type="project" value="RGD"/>
</dbReference>
<dbReference type="GO" id="GO:0009822">
    <property type="term" value="P:alkaloid catabolic process"/>
    <property type="evidence" value="ECO:0000266"/>
    <property type="project" value="RGD"/>
</dbReference>
<dbReference type="GO" id="GO:0008210">
    <property type="term" value="P:estrogen metabolic process"/>
    <property type="evidence" value="ECO:0000266"/>
    <property type="project" value="RGD"/>
</dbReference>
<dbReference type="GO" id="GO:0002933">
    <property type="term" value="P:lipid hydroxylation"/>
    <property type="evidence" value="ECO:0000266"/>
    <property type="project" value="RGD"/>
</dbReference>
<dbReference type="GO" id="GO:0016098">
    <property type="term" value="P:monoterpenoid metabolic process"/>
    <property type="evidence" value="ECO:0000266"/>
    <property type="project" value="RGD"/>
</dbReference>
<dbReference type="GO" id="GO:0070989">
    <property type="term" value="P:oxidative demethylation"/>
    <property type="evidence" value="ECO:0000314"/>
    <property type="project" value="RGD"/>
</dbReference>
<dbReference type="GO" id="GO:0042573">
    <property type="term" value="P:retinoic acid metabolic process"/>
    <property type="evidence" value="ECO:0000266"/>
    <property type="project" value="RGD"/>
</dbReference>
<dbReference type="GO" id="GO:0042572">
    <property type="term" value="P:retinol metabolic process"/>
    <property type="evidence" value="ECO:0000266"/>
    <property type="project" value="RGD"/>
</dbReference>
<dbReference type="GO" id="GO:0006706">
    <property type="term" value="P:steroid catabolic process"/>
    <property type="evidence" value="ECO:0000266"/>
    <property type="project" value="RGD"/>
</dbReference>
<dbReference type="GO" id="GO:0008202">
    <property type="term" value="P:steroid metabolic process"/>
    <property type="evidence" value="ECO:0000266"/>
    <property type="project" value="RGD"/>
</dbReference>
<dbReference type="GO" id="GO:0042369">
    <property type="term" value="P:vitamin D catabolic process"/>
    <property type="evidence" value="ECO:0000266"/>
    <property type="project" value="RGD"/>
</dbReference>
<dbReference type="GO" id="GO:0042359">
    <property type="term" value="P:vitamin D metabolic process"/>
    <property type="evidence" value="ECO:0000266"/>
    <property type="project" value="RGD"/>
</dbReference>
<dbReference type="GO" id="GO:0042178">
    <property type="term" value="P:xenobiotic catabolic process"/>
    <property type="evidence" value="ECO:0000266"/>
    <property type="project" value="RGD"/>
</dbReference>
<dbReference type="GO" id="GO:0006805">
    <property type="term" value="P:xenobiotic metabolic process"/>
    <property type="evidence" value="ECO:0000314"/>
    <property type="project" value="RGD"/>
</dbReference>
<dbReference type="CDD" id="cd20650">
    <property type="entry name" value="CYP3A"/>
    <property type="match status" value="1"/>
</dbReference>
<dbReference type="FunFam" id="1.10.630.10:FF:000096">
    <property type="entry name" value="Cytochrome P450 3A4"/>
    <property type="match status" value="1"/>
</dbReference>
<dbReference type="Gene3D" id="1.10.630.10">
    <property type="entry name" value="Cytochrome P450"/>
    <property type="match status" value="1"/>
</dbReference>
<dbReference type="InterPro" id="IPR001128">
    <property type="entry name" value="Cyt_P450"/>
</dbReference>
<dbReference type="InterPro" id="IPR017972">
    <property type="entry name" value="Cyt_P450_CS"/>
</dbReference>
<dbReference type="InterPro" id="IPR008072">
    <property type="entry name" value="Cyt_P450_E_CYP3A"/>
</dbReference>
<dbReference type="InterPro" id="IPR002402">
    <property type="entry name" value="Cyt_P450_E_grp-II"/>
</dbReference>
<dbReference type="InterPro" id="IPR036396">
    <property type="entry name" value="Cyt_P450_sf"/>
</dbReference>
<dbReference type="InterPro" id="IPR050705">
    <property type="entry name" value="Cytochrome_P450_3A"/>
</dbReference>
<dbReference type="PANTHER" id="PTHR24302:SF49">
    <property type="entry name" value="CYTOCHROME P450 3A-RELATED"/>
    <property type="match status" value="1"/>
</dbReference>
<dbReference type="PANTHER" id="PTHR24302">
    <property type="entry name" value="CYTOCHROME P450 FAMILY 3"/>
    <property type="match status" value="1"/>
</dbReference>
<dbReference type="Pfam" id="PF00067">
    <property type="entry name" value="p450"/>
    <property type="match status" value="1"/>
</dbReference>
<dbReference type="PRINTS" id="PR00464">
    <property type="entry name" value="EP450II"/>
</dbReference>
<dbReference type="PRINTS" id="PR01689">
    <property type="entry name" value="EP450IICYP3A"/>
</dbReference>
<dbReference type="PRINTS" id="PR00385">
    <property type="entry name" value="P450"/>
</dbReference>
<dbReference type="SUPFAM" id="SSF48264">
    <property type="entry name" value="Cytochrome P450"/>
    <property type="match status" value="1"/>
</dbReference>
<dbReference type="PROSITE" id="PS00086">
    <property type="entry name" value="CYTOCHROME_P450"/>
    <property type="match status" value="1"/>
</dbReference>
<keyword id="KW-0903">Direct protein sequencing</keyword>
<keyword id="KW-0256">Endoplasmic reticulum</keyword>
<keyword id="KW-0349">Heme</keyword>
<keyword id="KW-0408">Iron</keyword>
<keyword id="KW-0472">Membrane</keyword>
<keyword id="KW-0479">Metal-binding</keyword>
<keyword id="KW-0492">Microsome</keyword>
<keyword id="KW-0503">Monooxygenase</keyword>
<keyword id="KW-0560">Oxidoreductase</keyword>
<keyword id="KW-1185">Reference proteome</keyword>
<reference key="1">
    <citation type="journal article" date="1986" name="Mol. Cell. Biol.">
        <title>Pregnenolone 16 alpha-carbonitrile-inducible P-450 gene family: gene conversion and differential regulation.</title>
        <authorList>
            <person name="Gonzalez F.J."/>
            <person name="Song B.-J."/>
            <person name="Hardwick J.P."/>
        </authorList>
    </citation>
    <scope>NUCLEOTIDE SEQUENCE [MRNA]</scope>
</reference>
<reference key="2">
    <citation type="journal article" date="1991" name="Biochem. Biophys. Res. Commun.">
        <title>A gene structure of testosterone 6 beta-hydroxylase (P450IIIA).</title>
        <authorList>
            <person name="Miyata M."/>
            <person name="Nagata K."/>
            <person name="Yamazoe Y."/>
            <person name="Kato R."/>
        </authorList>
    </citation>
    <scope>NUCLEOTIDE SEQUENCE [GENOMIC DNA / MRNA]</scope>
    <source>
        <strain>Sprague-Dawley</strain>
        <tissue>Liver</tissue>
    </source>
</reference>
<reference key="3">
    <citation type="journal article" date="1994" name="Arch. Biochem. Biophys.">
        <title>Structure of a gene and cDNA of a major constitutive form of testosterone 6 beta-hydroxylase (P450/6 beta A) encoding CYP3A2: comparison of the cDNA with P450PCN2.</title>
        <authorList>
            <person name="Miyata M."/>
            <person name="Nagata K."/>
            <person name="Shimada M."/>
            <person name="Yamazoe Y."/>
            <person name="Kato R."/>
        </authorList>
    </citation>
    <scope>NUCLEOTIDE SEQUENCE [GENOMIC DNA / MRNA]</scope>
    <source>
        <strain>Sprague-Dawley</strain>
        <tissue>Liver</tissue>
    </source>
</reference>
<reference key="4">
    <citation type="journal article" date="2004" name="Genome Res.">
        <title>The status, quality, and expansion of the NIH full-length cDNA project: the Mammalian Gene Collection (MGC).</title>
        <authorList>
            <consortium name="The MGC Project Team"/>
        </authorList>
    </citation>
    <scope>NUCLEOTIDE SEQUENCE [LARGE SCALE MRNA]</scope>
    <source>
        <tissue>Liver</tissue>
    </source>
</reference>
<reference key="5">
    <citation type="journal article" date="1992" name="Arch. Biochem. Biophys.">
        <title>Effect of dexamethasone and phenobarbital on run-on transcription rate and CYP3A mRNA concentration in rat liver: changes during development.</title>
        <authorList>
            <person name="Telhada M.B."/>
            <person name="Pereira T.M."/>
            <person name="Lechner M.C."/>
        </authorList>
    </citation>
    <scope>NUCLEOTIDE SEQUENCE [MRNA] OF 1-36</scope>
    <scope>INDUCTION</scope>
    <source>
        <tissue>Liver</tissue>
    </source>
</reference>
<reference key="6">
    <citation type="journal article" date="1990" name="J. Biochem.">
        <title>Purification and characterization of four catalytically active testosterone 6 beta-hydroxylase P-450s from rat liver microsomes: comparison of a novel form with three structurally and functionally related forms.</title>
        <authorList>
            <person name="Nagata K."/>
            <person name="Gonzalez F.J."/>
            <person name="Yamazoe Y."/>
            <person name="Kato R."/>
        </authorList>
    </citation>
    <scope>PROTEIN SEQUENCE OF 1-33</scope>
    <scope>TISSUE SPECIFICITY</scope>
    <scope>INDUCTION</scope>
    <source>
        <tissue>Liver</tissue>
    </source>
</reference>
<reference key="7">
    <citation type="journal article" date="1993" name="Arch. Biochem. Biophys.">
        <title>Regulation of two members of the steroid-inducible cytochrome P450 subfamily (3A) in rats.</title>
        <authorList>
            <person name="Cooper K.O."/>
            <person name="Reik L.M."/>
            <person name="Jayyosi Z."/>
            <person name="Bandiera S."/>
            <person name="Kelley M."/>
            <person name="Ryan D.E."/>
            <person name="Daniel R."/>
            <person name="McCluskey S.A."/>
            <person name="Levin W."/>
            <person name="Thomas P.E."/>
        </authorList>
    </citation>
    <scope>PROTEIN SEQUENCE OF 1-25</scope>
    <scope>TISSUE SPECIFICITY</scope>
    <scope>INDUCTION</scope>
</reference>
<organism>
    <name type="scientific">Rattus norvegicus</name>
    <name type="common">Rat</name>
    <dbReference type="NCBI Taxonomy" id="10116"/>
    <lineage>
        <taxon>Eukaryota</taxon>
        <taxon>Metazoa</taxon>
        <taxon>Chordata</taxon>
        <taxon>Craniata</taxon>
        <taxon>Vertebrata</taxon>
        <taxon>Euteleostomi</taxon>
        <taxon>Mammalia</taxon>
        <taxon>Eutheria</taxon>
        <taxon>Euarchontoglires</taxon>
        <taxon>Glires</taxon>
        <taxon>Rodentia</taxon>
        <taxon>Myomorpha</taxon>
        <taxon>Muroidea</taxon>
        <taxon>Muridae</taxon>
        <taxon>Murinae</taxon>
        <taxon>Rattus</taxon>
    </lineage>
</organism>